<protein>
    <recommendedName>
        <fullName evidence="1">Probable Sec-independent protein translocase protein TatE</fullName>
    </recommendedName>
</protein>
<evidence type="ECO:0000255" key="1">
    <source>
        <dbReference type="HAMAP-Rule" id="MF_00903"/>
    </source>
</evidence>
<evidence type="ECO:0000256" key="2">
    <source>
        <dbReference type="SAM" id="MobiDB-lite"/>
    </source>
</evidence>
<name>TATE_KLEP7</name>
<accession>A6T688</accession>
<sequence>MGEISITKLLVVAALIILVFGTKKLRTLGGDLGSAIKGFKKAMNEDDDSAKKTTAEEEAPAQKLSHKE</sequence>
<organism>
    <name type="scientific">Klebsiella pneumoniae subsp. pneumoniae (strain ATCC 700721 / MGH 78578)</name>
    <dbReference type="NCBI Taxonomy" id="272620"/>
    <lineage>
        <taxon>Bacteria</taxon>
        <taxon>Pseudomonadati</taxon>
        <taxon>Pseudomonadota</taxon>
        <taxon>Gammaproteobacteria</taxon>
        <taxon>Enterobacterales</taxon>
        <taxon>Enterobacteriaceae</taxon>
        <taxon>Klebsiella/Raoultella group</taxon>
        <taxon>Klebsiella</taxon>
        <taxon>Klebsiella pneumoniae complex</taxon>
    </lineage>
</organism>
<gene>
    <name evidence="1" type="primary">tatE</name>
    <name type="ordered locus">KPN78578_06480</name>
    <name type="ORF">KPN_00659</name>
</gene>
<comment type="function">
    <text evidence="1">Part of the twin-arginine translocation (Tat) system that transports large folded proteins containing a characteristic twin-arginine motif in their signal peptide across membranes. TatE shares overlapping functions with TatA.</text>
</comment>
<comment type="subcellular location">
    <subcellularLocation>
        <location evidence="1">Cell inner membrane</location>
        <topology evidence="1">Single-pass membrane protein</topology>
    </subcellularLocation>
</comment>
<comment type="similarity">
    <text evidence="1">Belongs to the TatA/E family. TatE subfamily.</text>
</comment>
<dbReference type="EMBL" id="CP000647">
    <property type="protein sequence ID" value="ABR76109.1"/>
    <property type="molecule type" value="Genomic_DNA"/>
</dbReference>
<dbReference type="RefSeq" id="WP_002894464.1">
    <property type="nucleotide sequence ID" value="NC_009648.1"/>
</dbReference>
<dbReference type="SMR" id="A6T688"/>
<dbReference type="STRING" id="272620.KPN_00659"/>
<dbReference type="PaxDb" id="272620-KPN_00659"/>
<dbReference type="EnsemblBacteria" id="ABR76109">
    <property type="protein sequence ID" value="ABR76109"/>
    <property type="gene ID" value="KPN_00659"/>
</dbReference>
<dbReference type="GeneID" id="69756459"/>
<dbReference type="KEGG" id="kpn:KPN_00659"/>
<dbReference type="HOGENOM" id="CLU_086034_5_3_6"/>
<dbReference type="Proteomes" id="UP000000265">
    <property type="component" value="Chromosome"/>
</dbReference>
<dbReference type="GO" id="GO:0033281">
    <property type="term" value="C:TAT protein transport complex"/>
    <property type="evidence" value="ECO:0007669"/>
    <property type="project" value="UniProtKB-UniRule"/>
</dbReference>
<dbReference type="GO" id="GO:0008320">
    <property type="term" value="F:protein transmembrane transporter activity"/>
    <property type="evidence" value="ECO:0007669"/>
    <property type="project" value="UniProtKB-UniRule"/>
</dbReference>
<dbReference type="GO" id="GO:0043953">
    <property type="term" value="P:protein transport by the Tat complex"/>
    <property type="evidence" value="ECO:0007669"/>
    <property type="project" value="UniProtKB-UniRule"/>
</dbReference>
<dbReference type="Gene3D" id="1.20.5.3310">
    <property type="match status" value="1"/>
</dbReference>
<dbReference type="HAMAP" id="MF_00236">
    <property type="entry name" value="TatA_E"/>
    <property type="match status" value="1"/>
</dbReference>
<dbReference type="HAMAP" id="MF_00903">
    <property type="entry name" value="TatE"/>
    <property type="match status" value="1"/>
</dbReference>
<dbReference type="InterPro" id="IPR003369">
    <property type="entry name" value="TatA/B/E"/>
</dbReference>
<dbReference type="InterPro" id="IPR006312">
    <property type="entry name" value="TatA/E"/>
</dbReference>
<dbReference type="InterPro" id="IPR024905">
    <property type="entry name" value="TatE"/>
</dbReference>
<dbReference type="NCBIfam" id="NF002448">
    <property type="entry name" value="PRK01614.1"/>
    <property type="match status" value="1"/>
</dbReference>
<dbReference type="NCBIfam" id="NF002960">
    <property type="entry name" value="PRK03625.1"/>
    <property type="match status" value="1"/>
</dbReference>
<dbReference type="NCBIfam" id="TIGR01411">
    <property type="entry name" value="tatAE"/>
    <property type="match status" value="1"/>
</dbReference>
<dbReference type="PANTHER" id="PTHR42982">
    <property type="entry name" value="SEC-INDEPENDENT PROTEIN TRANSLOCASE PROTEIN TATA"/>
    <property type="match status" value="1"/>
</dbReference>
<dbReference type="PANTHER" id="PTHR42982:SF5">
    <property type="entry name" value="SEC-INDEPENDENT PROTEIN TRANSLOCASE PROTEIN TATE"/>
    <property type="match status" value="1"/>
</dbReference>
<dbReference type="Pfam" id="PF02416">
    <property type="entry name" value="TatA_B_E"/>
    <property type="match status" value="1"/>
</dbReference>
<keyword id="KW-0997">Cell inner membrane</keyword>
<keyword id="KW-1003">Cell membrane</keyword>
<keyword id="KW-0472">Membrane</keyword>
<keyword id="KW-0653">Protein transport</keyword>
<keyword id="KW-0811">Translocation</keyword>
<keyword id="KW-0812">Transmembrane</keyword>
<keyword id="KW-1133">Transmembrane helix</keyword>
<keyword id="KW-0813">Transport</keyword>
<reference key="1">
    <citation type="submission" date="2006-09" db="EMBL/GenBank/DDBJ databases">
        <authorList>
            <consortium name="The Klebsiella pneumonia Genome Sequencing Project"/>
            <person name="McClelland M."/>
            <person name="Sanderson E.K."/>
            <person name="Spieth J."/>
            <person name="Clifton W.S."/>
            <person name="Latreille P."/>
            <person name="Sabo A."/>
            <person name="Pepin K."/>
            <person name="Bhonagiri V."/>
            <person name="Porwollik S."/>
            <person name="Ali J."/>
            <person name="Wilson R.K."/>
        </authorList>
    </citation>
    <scope>NUCLEOTIDE SEQUENCE [LARGE SCALE GENOMIC DNA]</scope>
    <source>
        <strain>ATCC 700721 / MGH 78578</strain>
    </source>
</reference>
<feature type="chain" id="PRO_0000412969" description="Probable Sec-independent protein translocase protein TatE">
    <location>
        <begin position="1"/>
        <end position="68"/>
    </location>
</feature>
<feature type="transmembrane region" description="Helical" evidence="1">
    <location>
        <begin position="1"/>
        <end position="21"/>
    </location>
</feature>
<feature type="region of interest" description="Disordered" evidence="2">
    <location>
        <begin position="43"/>
        <end position="68"/>
    </location>
</feature>
<proteinExistence type="inferred from homology"/>